<gene>
    <name evidence="1" type="primary">pyrD</name>
    <name type="ordered locus">SeHA_C1167</name>
</gene>
<feature type="chain" id="PRO_1000100285" description="Dihydroorotate dehydrogenase (quinone)">
    <location>
        <begin position="1"/>
        <end position="336"/>
    </location>
</feature>
<feature type="active site" description="Nucleophile" evidence="1">
    <location>
        <position position="175"/>
    </location>
</feature>
<feature type="binding site" evidence="1">
    <location>
        <begin position="62"/>
        <end position="66"/>
    </location>
    <ligand>
        <name>FMN</name>
        <dbReference type="ChEBI" id="CHEBI:58210"/>
    </ligand>
</feature>
<feature type="binding site" evidence="1">
    <location>
        <position position="66"/>
    </location>
    <ligand>
        <name>substrate</name>
    </ligand>
</feature>
<feature type="binding site" evidence="1">
    <location>
        <position position="86"/>
    </location>
    <ligand>
        <name>FMN</name>
        <dbReference type="ChEBI" id="CHEBI:58210"/>
    </ligand>
</feature>
<feature type="binding site" evidence="1">
    <location>
        <begin position="111"/>
        <end position="115"/>
    </location>
    <ligand>
        <name>substrate</name>
    </ligand>
</feature>
<feature type="binding site" evidence="1">
    <location>
        <position position="139"/>
    </location>
    <ligand>
        <name>FMN</name>
        <dbReference type="ChEBI" id="CHEBI:58210"/>
    </ligand>
</feature>
<feature type="binding site" evidence="1">
    <location>
        <position position="172"/>
    </location>
    <ligand>
        <name>FMN</name>
        <dbReference type="ChEBI" id="CHEBI:58210"/>
    </ligand>
</feature>
<feature type="binding site" evidence="1">
    <location>
        <position position="172"/>
    </location>
    <ligand>
        <name>substrate</name>
    </ligand>
</feature>
<feature type="binding site" evidence="1">
    <location>
        <position position="177"/>
    </location>
    <ligand>
        <name>substrate</name>
    </ligand>
</feature>
<feature type="binding site" evidence="1">
    <location>
        <position position="217"/>
    </location>
    <ligand>
        <name>FMN</name>
        <dbReference type="ChEBI" id="CHEBI:58210"/>
    </ligand>
</feature>
<feature type="binding site" evidence="1">
    <location>
        <position position="245"/>
    </location>
    <ligand>
        <name>FMN</name>
        <dbReference type="ChEBI" id="CHEBI:58210"/>
    </ligand>
</feature>
<feature type="binding site" evidence="1">
    <location>
        <begin position="246"/>
        <end position="247"/>
    </location>
    <ligand>
        <name>substrate</name>
    </ligand>
</feature>
<feature type="binding site" evidence="1">
    <location>
        <position position="268"/>
    </location>
    <ligand>
        <name>FMN</name>
        <dbReference type="ChEBI" id="CHEBI:58210"/>
    </ligand>
</feature>
<feature type="binding site" evidence="1">
    <location>
        <position position="297"/>
    </location>
    <ligand>
        <name>FMN</name>
        <dbReference type="ChEBI" id="CHEBI:58210"/>
    </ligand>
</feature>
<feature type="binding site" evidence="1">
    <location>
        <begin position="318"/>
        <end position="319"/>
    </location>
    <ligand>
        <name>FMN</name>
        <dbReference type="ChEBI" id="CHEBI:58210"/>
    </ligand>
</feature>
<reference key="1">
    <citation type="journal article" date="2011" name="J. Bacteriol.">
        <title>Comparative genomics of 28 Salmonella enterica isolates: evidence for CRISPR-mediated adaptive sublineage evolution.</title>
        <authorList>
            <person name="Fricke W.F."/>
            <person name="Mammel M.K."/>
            <person name="McDermott P.F."/>
            <person name="Tartera C."/>
            <person name="White D.G."/>
            <person name="Leclerc J.E."/>
            <person name="Ravel J."/>
            <person name="Cebula T.A."/>
        </authorList>
    </citation>
    <scope>NUCLEOTIDE SEQUENCE [LARGE SCALE GENOMIC DNA]</scope>
    <source>
        <strain>SL476</strain>
    </source>
</reference>
<keyword id="KW-1003">Cell membrane</keyword>
<keyword id="KW-0285">Flavoprotein</keyword>
<keyword id="KW-0288">FMN</keyword>
<keyword id="KW-0472">Membrane</keyword>
<keyword id="KW-0560">Oxidoreductase</keyword>
<keyword id="KW-0665">Pyrimidine biosynthesis</keyword>
<protein>
    <recommendedName>
        <fullName evidence="1">Dihydroorotate dehydrogenase (quinone)</fullName>
        <ecNumber evidence="1">1.3.5.2</ecNumber>
    </recommendedName>
    <alternativeName>
        <fullName evidence="1">DHOdehase</fullName>
        <shortName evidence="1">DHOD</shortName>
        <shortName evidence="1">DHODase</shortName>
    </alternativeName>
    <alternativeName>
        <fullName evidence="1">Dihydroorotate oxidase</fullName>
    </alternativeName>
</protein>
<dbReference type="EC" id="1.3.5.2" evidence="1"/>
<dbReference type="EMBL" id="CP001120">
    <property type="protein sequence ID" value="ACF69289.1"/>
    <property type="molecule type" value="Genomic_DNA"/>
</dbReference>
<dbReference type="RefSeq" id="WP_000291723.1">
    <property type="nucleotide sequence ID" value="NC_011083.1"/>
</dbReference>
<dbReference type="SMR" id="B4TDY5"/>
<dbReference type="KEGG" id="seh:SeHA_C1167"/>
<dbReference type="HOGENOM" id="CLU_013640_2_0_6"/>
<dbReference type="UniPathway" id="UPA00070">
    <property type="reaction ID" value="UER00946"/>
</dbReference>
<dbReference type="Proteomes" id="UP000001866">
    <property type="component" value="Chromosome"/>
</dbReference>
<dbReference type="GO" id="GO:0005737">
    <property type="term" value="C:cytoplasm"/>
    <property type="evidence" value="ECO:0007669"/>
    <property type="project" value="InterPro"/>
</dbReference>
<dbReference type="GO" id="GO:0005886">
    <property type="term" value="C:plasma membrane"/>
    <property type="evidence" value="ECO:0007669"/>
    <property type="project" value="UniProtKB-SubCell"/>
</dbReference>
<dbReference type="GO" id="GO:0106430">
    <property type="term" value="F:dihydroorotate dehydrogenase (quinone) activity"/>
    <property type="evidence" value="ECO:0007669"/>
    <property type="project" value="UniProtKB-EC"/>
</dbReference>
<dbReference type="GO" id="GO:0006207">
    <property type="term" value="P:'de novo' pyrimidine nucleobase biosynthetic process"/>
    <property type="evidence" value="ECO:0007669"/>
    <property type="project" value="InterPro"/>
</dbReference>
<dbReference type="GO" id="GO:0044205">
    <property type="term" value="P:'de novo' UMP biosynthetic process"/>
    <property type="evidence" value="ECO:0007669"/>
    <property type="project" value="UniProtKB-UniRule"/>
</dbReference>
<dbReference type="CDD" id="cd04738">
    <property type="entry name" value="DHOD_2_like"/>
    <property type="match status" value="1"/>
</dbReference>
<dbReference type="FunFam" id="3.20.20.70:FF:000028">
    <property type="entry name" value="Dihydroorotate dehydrogenase (quinone)"/>
    <property type="match status" value="1"/>
</dbReference>
<dbReference type="Gene3D" id="3.20.20.70">
    <property type="entry name" value="Aldolase class I"/>
    <property type="match status" value="1"/>
</dbReference>
<dbReference type="HAMAP" id="MF_00225">
    <property type="entry name" value="DHO_dh_type2"/>
    <property type="match status" value="1"/>
</dbReference>
<dbReference type="InterPro" id="IPR013785">
    <property type="entry name" value="Aldolase_TIM"/>
</dbReference>
<dbReference type="InterPro" id="IPR050074">
    <property type="entry name" value="DHO_dehydrogenase"/>
</dbReference>
<dbReference type="InterPro" id="IPR012135">
    <property type="entry name" value="Dihydroorotate_DH_1_2"/>
</dbReference>
<dbReference type="InterPro" id="IPR005719">
    <property type="entry name" value="Dihydroorotate_DH_2"/>
</dbReference>
<dbReference type="InterPro" id="IPR005720">
    <property type="entry name" value="Dihydroorotate_DH_cat"/>
</dbReference>
<dbReference type="InterPro" id="IPR001295">
    <property type="entry name" value="Dihydroorotate_DH_CS"/>
</dbReference>
<dbReference type="NCBIfam" id="NF003644">
    <property type="entry name" value="PRK05286.1-1"/>
    <property type="match status" value="1"/>
</dbReference>
<dbReference type="NCBIfam" id="NF003645">
    <property type="entry name" value="PRK05286.1-2"/>
    <property type="match status" value="1"/>
</dbReference>
<dbReference type="NCBIfam" id="NF003646">
    <property type="entry name" value="PRK05286.1-4"/>
    <property type="match status" value="1"/>
</dbReference>
<dbReference type="NCBIfam" id="NF003652">
    <property type="entry name" value="PRK05286.2-5"/>
    <property type="match status" value="1"/>
</dbReference>
<dbReference type="NCBIfam" id="TIGR01036">
    <property type="entry name" value="pyrD_sub2"/>
    <property type="match status" value="1"/>
</dbReference>
<dbReference type="PANTHER" id="PTHR48109:SF4">
    <property type="entry name" value="DIHYDROOROTATE DEHYDROGENASE (QUINONE), MITOCHONDRIAL"/>
    <property type="match status" value="1"/>
</dbReference>
<dbReference type="PANTHER" id="PTHR48109">
    <property type="entry name" value="DIHYDROOROTATE DEHYDROGENASE (QUINONE), MITOCHONDRIAL-RELATED"/>
    <property type="match status" value="1"/>
</dbReference>
<dbReference type="Pfam" id="PF01180">
    <property type="entry name" value="DHO_dh"/>
    <property type="match status" value="1"/>
</dbReference>
<dbReference type="PIRSF" id="PIRSF000164">
    <property type="entry name" value="DHO_oxidase"/>
    <property type="match status" value="1"/>
</dbReference>
<dbReference type="SUPFAM" id="SSF51395">
    <property type="entry name" value="FMN-linked oxidoreductases"/>
    <property type="match status" value="1"/>
</dbReference>
<dbReference type="PROSITE" id="PS00911">
    <property type="entry name" value="DHODEHASE_1"/>
    <property type="match status" value="1"/>
</dbReference>
<dbReference type="PROSITE" id="PS00912">
    <property type="entry name" value="DHODEHASE_2"/>
    <property type="match status" value="1"/>
</dbReference>
<evidence type="ECO:0000255" key="1">
    <source>
        <dbReference type="HAMAP-Rule" id="MF_00225"/>
    </source>
</evidence>
<sequence>MYYPFVRKALFQLDPERAHEFTFQQLRRITGTPLEALVRQKVPTKPVTCMGLTFKNPLGLAAGLDKDGECIDALGAMGFGSLEIGTVTPRPQPGNDKPRLFRLVDAEGLINRMGFNNLGVDNLVENVKKAHFDGILGINIGKNKDTPVENGKDDYLICMEKVYAYAGYIAINISSPNTPGLRTLQYGDALDDLLTAIKNKQNDLQAIHHKYVPVAVKIAPDLCEEELIQVADSLLRHNIDGVIATNTTLDRSLVQGMKNCQQTGGLSGRPLQLKSTEIIRRLSQELKGQLPIIGVGGIDSVIAAREKIAAGATLVQIYSGFIFKGPPLIKEIVTHI</sequence>
<organism>
    <name type="scientific">Salmonella heidelberg (strain SL476)</name>
    <dbReference type="NCBI Taxonomy" id="454169"/>
    <lineage>
        <taxon>Bacteria</taxon>
        <taxon>Pseudomonadati</taxon>
        <taxon>Pseudomonadota</taxon>
        <taxon>Gammaproteobacteria</taxon>
        <taxon>Enterobacterales</taxon>
        <taxon>Enterobacteriaceae</taxon>
        <taxon>Salmonella</taxon>
    </lineage>
</organism>
<accession>B4TDY5</accession>
<name>PYRD_SALHS</name>
<comment type="function">
    <text evidence="1">Catalyzes the conversion of dihydroorotate to orotate with quinone as electron acceptor.</text>
</comment>
<comment type="catalytic activity">
    <reaction evidence="1">
        <text>(S)-dihydroorotate + a quinone = orotate + a quinol</text>
        <dbReference type="Rhea" id="RHEA:30187"/>
        <dbReference type="ChEBI" id="CHEBI:24646"/>
        <dbReference type="ChEBI" id="CHEBI:30839"/>
        <dbReference type="ChEBI" id="CHEBI:30864"/>
        <dbReference type="ChEBI" id="CHEBI:132124"/>
        <dbReference type="EC" id="1.3.5.2"/>
    </reaction>
</comment>
<comment type="cofactor">
    <cofactor evidence="1">
        <name>FMN</name>
        <dbReference type="ChEBI" id="CHEBI:58210"/>
    </cofactor>
    <text evidence="1">Binds 1 FMN per subunit.</text>
</comment>
<comment type="pathway">
    <text evidence="1">Pyrimidine metabolism; UMP biosynthesis via de novo pathway; orotate from (S)-dihydroorotate (quinone route): step 1/1.</text>
</comment>
<comment type="subunit">
    <text evidence="1">Monomer.</text>
</comment>
<comment type="subcellular location">
    <subcellularLocation>
        <location evidence="1">Cell membrane</location>
        <topology evidence="1">Peripheral membrane protein</topology>
    </subcellularLocation>
</comment>
<comment type="similarity">
    <text evidence="1">Belongs to the dihydroorotate dehydrogenase family. Type 2 subfamily.</text>
</comment>
<proteinExistence type="inferred from homology"/>